<reference key="1">
    <citation type="journal article" date="2003" name="Nature">
        <title>The genome sequence of Bacillus anthracis Ames and comparison to closely related bacteria.</title>
        <authorList>
            <person name="Read T.D."/>
            <person name="Peterson S.N."/>
            <person name="Tourasse N.J."/>
            <person name="Baillie L.W."/>
            <person name="Paulsen I.T."/>
            <person name="Nelson K.E."/>
            <person name="Tettelin H."/>
            <person name="Fouts D.E."/>
            <person name="Eisen J.A."/>
            <person name="Gill S.R."/>
            <person name="Holtzapple E.K."/>
            <person name="Okstad O.A."/>
            <person name="Helgason E."/>
            <person name="Rilstone J."/>
            <person name="Wu M."/>
            <person name="Kolonay J.F."/>
            <person name="Beanan M.J."/>
            <person name="Dodson R.J."/>
            <person name="Brinkac L.M."/>
            <person name="Gwinn M.L."/>
            <person name="DeBoy R.T."/>
            <person name="Madpu R."/>
            <person name="Daugherty S.C."/>
            <person name="Durkin A.S."/>
            <person name="Haft D.H."/>
            <person name="Nelson W.C."/>
            <person name="Peterson J.D."/>
            <person name="Pop M."/>
            <person name="Khouri H.M."/>
            <person name="Radune D."/>
            <person name="Benton J.L."/>
            <person name="Mahamoud Y."/>
            <person name="Jiang L."/>
            <person name="Hance I.R."/>
            <person name="Weidman J.F."/>
            <person name="Berry K.J."/>
            <person name="Plaut R.D."/>
            <person name="Wolf A.M."/>
            <person name="Watkins K.L."/>
            <person name="Nierman W.C."/>
            <person name="Hazen A."/>
            <person name="Cline R.T."/>
            <person name="Redmond C."/>
            <person name="Thwaite J.E."/>
            <person name="White O."/>
            <person name="Salzberg S.L."/>
            <person name="Thomason B."/>
            <person name="Friedlander A.M."/>
            <person name="Koehler T.M."/>
            <person name="Hanna P.C."/>
            <person name="Kolstoe A.-B."/>
            <person name="Fraser C.M."/>
        </authorList>
    </citation>
    <scope>NUCLEOTIDE SEQUENCE [LARGE SCALE GENOMIC DNA]</scope>
    <source>
        <strain>Ames / isolate Porton</strain>
    </source>
</reference>
<reference key="2">
    <citation type="journal article" date="2009" name="J. Bacteriol.">
        <title>The complete genome sequence of Bacillus anthracis Ames 'Ancestor'.</title>
        <authorList>
            <person name="Ravel J."/>
            <person name="Jiang L."/>
            <person name="Stanley S.T."/>
            <person name="Wilson M.R."/>
            <person name="Decker R.S."/>
            <person name="Read T.D."/>
            <person name="Worsham P."/>
            <person name="Keim P.S."/>
            <person name="Salzberg S.L."/>
            <person name="Fraser-Liggett C.M."/>
            <person name="Rasko D.A."/>
        </authorList>
    </citation>
    <scope>NUCLEOTIDE SEQUENCE [LARGE SCALE GENOMIC DNA]</scope>
    <source>
        <strain>Ames ancestor</strain>
    </source>
</reference>
<reference key="3">
    <citation type="submission" date="2004-01" db="EMBL/GenBank/DDBJ databases">
        <title>Complete genome sequence of Bacillus anthracis Sterne.</title>
        <authorList>
            <person name="Brettin T.S."/>
            <person name="Bruce D."/>
            <person name="Challacombe J.F."/>
            <person name="Gilna P."/>
            <person name="Han C."/>
            <person name="Hill K."/>
            <person name="Hitchcock P."/>
            <person name="Jackson P."/>
            <person name="Keim P."/>
            <person name="Longmire J."/>
            <person name="Lucas S."/>
            <person name="Okinaka R."/>
            <person name="Richardson P."/>
            <person name="Rubin E."/>
            <person name="Tice H."/>
        </authorList>
    </citation>
    <scope>NUCLEOTIDE SEQUENCE [LARGE SCALE GENOMIC DNA]</scope>
    <source>
        <strain>Sterne</strain>
    </source>
</reference>
<proteinExistence type="inferred from homology"/>
<feature type="chain" id="PRO_0000172546" description="Phosphatidylglycerol--prolipoprotein diacylglyceryl transferase">
    <location>
        <begin position="1"/>
        <end position="270"/>
    </location>
</feature>
<feature type="transmembrane region" description="Helical" evidence="1">
    <location>
        <begin position="19"/>
        <end position="39"/>
    </location>
</feature>
<feature type="transmembrane region" description="Helical" evidence="1">
    <location>
        <begin position="56"/>
        <end position="76"/>
    </location>
</feature>
<feature type="transmembrane region" description="Helical" evidence="1">
    <location>
        <begin position="92"/>
        <end position="112"/>
    </location>
</feature>
<feature type="transmembrane region" description="Helical" evidence="1">
    <location>
        <begin position="116"/>
        <end position="136"/>
    </location>
</feature>
<feature type="transmembrane region" description="Helical" evidence="1">
    <location>
        <begin position="178"/>
        <end position="198"/>
    </location>
</feature>
<feature type="transmembrane region" description="Helical" evidence="1">
    <location>
        <begin position="206"/>
        <end position="226"/>
    </location>
</feature>
<feature type="transmembrane region" description="Helical" evidence="1">
    <location>
        <begin position="236"/>
        <end position="256"/>
    </location>
</feature>
<feature type="binding site" evidence="1">
    <location>
        <position position="138"/>
    </location>
    <ligand>
        <name>a 1,2-diacyl-sn-glycero-3-phospho-(1'-sn-glycerol)</name>
        <dbReference type="ChEBI" id="CHEBI:64716"/>
    </ligand>
</feature>
<keyword id="KW-1003">Cell membrane</keyword>
<keyword id="KW-0472">Membrane</keyword>
<keyword id="KW-1185">Reference proteome</keyword>
<keyword id="KW-0808">Transferase</keyword>
<keyword id="KW-0812">Transmembrane</keyword>
<keyword id="KW-1133">Transmembrane helix</keyword>
<name>LGT_BACAN</name>
<dbReference type="EC" id="2.5.1.145" evidence="1"/>
<dbReference type="EMBL" id="AE016879">
    <property type="protein sequence ID" value="AAP29050.1"/>
    <property type="molecule type" value="Genomic_DNA"/>
</dbReference>
<dbReference type="EMBL" id="AE017334">
    <property type="protein sequence ID" value="AAT34525.1"/>
    <property type="molecule type" value="Genomic_DNA"/>
</dbReference>
<dbReference type="EMBL" id="AE017225">
    <property type="protein sequence ID" value="AAT57300.1"/>
    <property type="molecule type" value="Genomic_DNA"/>
</dbReference>
<dbReference type="RefSeq" id="NP_847564.1">
    <property type="nucleotide sequence ID" value="NC_003997.3"/>
</dbReference>
<dbReference type="RefSeq" id="WP_000924244.1">
    <property type="nucleotide sequence ID" value="NZ_WXXJ01000012.1"/>
</dbReference>
<dbReference type="RefSeq" id="YP_031250.1">
    <property type="nucleotide sequence ID" value="NC_005945.1"/>
</dbReference>
<dbReference type="SMR" id="Q81X52"/>
<dbReference type="STRING" id="261594.GBAA_5391"/>
<dbReference type="DNASU" id="1084953"/>
<dbReference type="GeneID" id="45024994"/>
<dbReference type="KEGG" id="ban:BA_5391"/>
<dbReference type="KEGG" id="bar:GBAA_5391"/>
<dbReference type="KEGG" id="bat:BAS5011"/>
<dbReference type="PATRIC" id="fig|198094.11.peg.5349"/>
<dbReference type="eggNOG" id="COG0682">
    <property type="taxonomic scope" value="Bacteria"/>
</dbReference>
<dbReference type="HOGENOM" id="CLU_013386_1_2_9"/>
<dbReference type="OMA" id="SIRWYGL"/>
<dbReference type="OrthoDB" id="871140at2"/>
<dbReference type="UniPathway" id="UPA00664"/>
<dbReference type="Proteomes" id="UP000000427">
    <property type="component" value="Chromosome"/>
</dbReference>
<dbReference type="Proteomes" id="UP000000594">
    <property type="component" value="Chromosome"/>
</dbReference>
<dbReference type="GO" id="GO:0005886">
    <property type="term" value="C:plasma membrane"/>
    <property type="evidence" value="ECO:0007669"/>
    <property type="project" value="UniProtKB-SubCell"/>
</dbReference>
<dbReference type="GO" id="GO:0008961">
    <property type="term" value="F:phosphatidylglycerol-prolipoprotein diacylglyceryl transferase activity"/>
    <property type="evidence" value="ECO:0007669"/>
    <property type="project" value="UniProtKB-UniRule"/>
</dbReference>
<dbReference type="GO" id="GO:0042158">
    <property type="term" value="P:lipoprotein biosynthetic process"/>
    <property type="evidence" value="ECO:0007669"/>
    <property type="project" value="UniProtKB-UniRule"/>
</dbReference>
<dbReference type="HAMAP" id="MF_01147">
    <property type="entry name" value="Lgt"/>
    <property type="match status" value="1"/>
</dbReference>
<dbReference type="InterPro" id="IPR001640">
    <property type="entry name" value="Lgt"/>
</dbReference>
<dbReference type="NCBIfam" id="TIGR00544">
    <property type="entry name" value="lgt"/>
    <property type="match status" value="1"/>
</dbReference>
<dbReference type="PANTHER" id="PTHR30589:SF0">
    <property type="entry name" value="PHOSPHATIDYLGLYCEROL--PROLIPOPROTEIN DIACYLGLYCERYL TRANSFERASE"/>
    <property type="match status" value="1"/>
</dbReference>
<dbReference type="PANTHER" id="PTHR30589">
    <property type="entry name" value="PROLIPOPROTEIN DIACYLGLYCERYL TRANSFERASE"/>
    <property type="match status" value="1"/>
</dbReference>
<dbReference type="Pfam" id="PF01790">
    <property type="entry name" value="LGT"/>
    <property type="match status" value="1"/>
</dbReference>
<dbReference type="PROSITE" id="PS01311">
    <property type="entry name" value="LGT"/>
    <property type="match status" value="1"/>
</dbReference>
<evidence type="ECO:0000255" key="1">
    <source>
        <dbReference type="HAMAP-Rule" id="MF_01147"/>
    </source>
</evidence>
<accession>Q81X52</accession>
<accession>Q6HQY8</accession>
<accession>Q6KKA7</accession>
<comment type="function">
    <text evidence="1">Catalyzes the transfer of the diacylglyceryl group from phosphatidylglycerol to the sulfhydryl group of the N-terminal cysteine of a prolipoprotein, the first step in the formation of mature lipoproteins.</text>
</comment>
<comment type="catalytic activity">
    <reaction evidence="1">
        <text>L-cysteinyl-[prolipoprotein] + a 1,2-diacyl-sn-glycero-3-phospho-(1'-sn-glycerol) = an S-1,2-diacyl-sn-glyceryl-L-cysteinyl-[prolipoprotein] + sn-glycerol 1-phosphate + H(+)</text>
        <dbReference type="Rhea" id="RHEA:56712"/>
        <dbReference type="Rhea" id="RHEA-COMP:14679"/>
        <dbReference type="Rhea" id="RHEA-COMP:14680"/>
        <dbReference type="ChEBI" id="CHEBI:15378"/>
        <dbReference type="ChEBI" id="CHEBI:29950"/>
        <dbReference type="ChEBI" id="CHEBI:57685"/>
        <dbReference type="ChEBI" id="CHEBI:64716"/>
        <dbReference type="ChEBI" id="CHEBI:140658"/>
        <dbReference type="EC" id="2.5.1.145"/>
    </reaction>
</comment>
<comment type="pathway">
    <text evidence="1">Protein modification; lipoprotein biosynthesis (diacylglyceryl transfer).</text>
</comment>
<comment type="subcellular location">
    <subcellularLocation>
        <location evidence="1">Cell membrane</location>
        <topology evidence="1">Multi-pass membrane protein</topology>
    </subcellularLocation>
</comment>
<comment type="similarity">
    <text evidence="1">Belongs to the Lgt family.</text>
</comment>
<sequence>MLLGSVPQLDRVAVQLGPFPVYWYGIIIGTGVLLGLWLATREGERLGIPKDTFVDLVLIAVPIAILFARMYYVIFEWEYYAQNPSQIINIRQGGLAIHGGLIGAVVTGILFAKRRGVSFWKLADIAAPSILLGQAIGRWGNFMNQEAHGDEVTRQFLEGLHLPDFIINQMYIDGVYYHPTFLYESLWNFAGVILLLALRKVNLRRGELFFTYLIWYSIGRFFVEGLRTDSLMLGPLRIAQVMSIGLVVISIIFIIVRRKMGQADKRYSEN</sequence>
<protein>
    <recommendedName>
        <fullName evidence="1">Phosphatidylglycerol--prolipoprotein diacylglyceryl transferase</fullName>
        <ecNumber evidence="1">2.5.1.145</ecNumber>
    </recommendedName>
</protein>
<gene>
    <name evidence="1" type="primary">lgt</name>
    <name type="ordered locus">BA_5391</name>
    <name type="ordered locus">GBAA_5391</name>
    <name type="ordered locus">BAS5011</name>
</gene>
<organism>
    <name type="scientific">Bacillus anthracis</name>
    <dbReference type="NCBI Taxonomy" id="1392"/>
    <lineage>
        <taxon>Bacteria</taxon>
        <taxon>Bacillati</taxon>
        <taxon>Bacillota</taxon>
        <taxon>Bacilli</taxon>
        <taxon>Bacillales</taxon>
        <taxon>Bacillaceae</taxon>
        <taxon>Bacillus</taxon>
        <taxon>Bacillus cereus group</taxon>
    </lineage>
</organism>